<sequence length="127" mass="15159">MSCLLIVARTTSGKLCWCWNPFSTTLKTSAEMMMKMKIMWTIARATKKAYLAGMWKEMIMWLSVILSLIQGSLHWKKYVKLLQDRNGYKEKSKEKKQDPAFSFEPWRMLMHSLFIWYQIVVQMIYIC</sequence>
<name>PSY1_YEAST</name>
<accession>P36082</accession>
<comment type="disruption phenotype">
    <text evidence="1 2">Leads to sensitivity the DNA-damaging agents cisplatin and oxaliplatin, but not to mitomycin C.</text>
</comment>
<comment type="miscellaneous">
    <text evidence="3">Partially overlaps ORF YKL075C. Disruption phenotypes caused by deletion of this gene may also be a result of a defect in its overlapping gene.</text>
</comment>
<comment type="caution">
    <text evidence="4">Product of a dubious gene prediction unlikely to encode a functional protein. Because of that it is not part of the S.cerevisiae S288c complete/reference proteome set.</text>
</comment>
<reference key="1">
    <citation type="journal article" date="1994" name="Nature">
        <title>Complete DNA sequence of yeast chromosome XI.</title>
        <authorList>
            <person name="Dujon B."/>
            <person name="Alexandraki D."/>
            <person name="Andre B."/>
            <person name="Ansorge W."/>
            <person name="Baladron V."/>
            <person name="Ballesta J.P.G."/>
            <person name="Banrevi A."/>
            <person name="Bolle P.-A."/>
            <person name="Bolotin-Fukuhara M."/>
            <person name="Bossier P."/>
            <person name="Bou G."/>
            <person name="Boyer J."/>
            <person name="Buitrago M.J."/>
            <person name="Cheret G."/>
            <person name="Colleaux L."/>
            <person name="Daignan-Fornier B."/>
            <person name="del Rey F."/>
            <person name="Dion C."/>
            <person name="Domdey H."/>
            <person name="Duesterhoeft A."/>
            <person name="Duesterhus S."/>
            <person name="Entian K.-D."/>
            <person name="Erfle H."/>
            <person name="Esteban P.F."/>
            <person name="Feldmann H."/>
            <person name="Fernandes L."/>
            <person name="Fobo G.M."/>
            <person name="Fritz C."/>
            <person name="Fukuhara H."/>
            <person name="Gabel C."/>
            <person name="Gaillon L."/>
            <person name="Garcia-Cantalejo J.M."/>
            <person name="Garcia-Ramirez J.J."/>
            <person name="Gent M.E."/>
            <person name="Ghazvini M."/>
            <person name="Goffeau A."/>
            <person name="Gonzalez A."/>
            <person name="Grothues D."/>
            <person name="Guerreiro P."/>
            <person name="Hegemann J.H."/>
            <person name="Hewitt N."/>
            <person name="Hilger F."/>
            <person name="Hollenberg C.P."/>
            <person name="Horaitis O."/>
            <person name="Indge K.J."/>
            <person name="Jacquier A."/>
            <person name="James C.M."/>
            <person name="Jauniaux J.-C."/>
            <person name="Jimenez A."/>
            <person name="Keuchel H."/>
            <person name="Kirchrath L."/>
            <person name="Kleine K."/>
            <person name="Koetter P."/>
            <person name="Legrain P."/>
            <person name="Liebl S."/>
            <person name="Louis E.J."/>
            <person name="Maia e Silva A."/>
            <person name="Marck C."/>
            <person name="Monnier A.-L."/>
            <person name="Moestl D."/>
            <person name="Mueller S."/>
            <person name="Obermaier B."/>
            <person name="Oliver S.G."/>
            <person name="Pallier C."/>
            <person name="Pascolo S."/>
            <person name="Pfeiffer F."/>
            <person name="Philippsen P."/>
            <person name="Planta R.J."/>
            <person name="Pohl F.M."/>
            <person name="Pohl T.M."/>
            <person name="Poehlmann R."/>
            <person name="Portetelle D."/>
            <person name="Purnelle B."/>
            <person name="Puzos V."/>
            <person name="Ramezani Rad M."/>
            <person name="Rasmussen S.W."/>
            <person name="Remacha M.A."/>
            <person name="Revuelta J.L."/>
            <person name="Richard G.-F."/>
            <person name="Rieger M."/>
            <person name="Rodrigues-Pousada C."/>
            <person name="Rose M."/>
            <person name="Rupp T."/>
            <person name="Santos M.A."/>
            <person name="Schwager C."/>
            <person name="Sensen C."/>
            <person name="Skala J."/>
            <person name="Soares H."/>
            <person name="Sor F."/>
            <person name="Stegemann J."/>
            <person name="Tettelin H."/>
            <person name="Thierry A."/>
            <person name="Tzermia M."/>
            <person name="Urrestarazu L.A."/>
            <person name="van Dyck L."/>
            <person name="van Vliet-Reedijk J.C."/>
            <person name="Valens M."/>
            <person name="Vandenbol M."/>
            <person name="Vilela C."/>
            <person name="Vissers S."/>
            <person name="von Wettstein D."/>
            <person name="Voss H."/>
            <person name="Wiemann S."/>
            <person name="Xu G."/>
            <person name="Zimmermann J."/>
            <person name="Haasemann M."/>
            <person name="Becker I."/>
            <person name="Mewes H.-W."/>
        </authorList>
    </citation>
    <scope>NUCLEOTIDE SEQUENCE [LARGE SCALE GENOMIC DNA]</scope>
    <source>
        <strain>ATCC 204508 / S288c</strain>
    </source>
</reference>
<reference key="2">
    <citation type="journal article" date="2014" name="G3 (Bethesda)">
        <title>The reference genome sequence of Saccharomyces cerevisiae: Then and now.</title>
        <authorList>
            <person name="Engel S.R."/>
            <person name="Dietrich F.S."/>
            <person name="Fisk D.G."/>
            <person name="Binkley G."/>
            <person name="Balakrishnan R."/>
            <person name="Costanzo M.C."/>
            <person name="Dwight S.S."/>
            <person name="Hitz B.C."/>
            <person name="Karra K."/>
            <person name="Nash R.S."/>
            <person name="Weng S."/>
            <person name="Wong E.D."/>
            <person name="Lloyd P."/>
            <person name="Skrzypek M.S."/>
            <person name="Miyasato S.R."/>
            <person name="Simison M."/>
            <person name="Cherry J.M."/>
        </authorList>
    </citation>
    <scope>GENOME REANNOTATION</scope>
    <source>
        <strain>ATCC 204508 / S288c</strain>
    </source>
</reference>
<reference key="3">
    <citation type="journal article" date="2004" name="Cancer Res.">
        <title>Genome-wide identification of genes conferring resistance to the anticancer agents cisplatin, oxaliplatin, and mitomycin C.</title>
        <authorList>
            <person name="Wu H.I."/>
            <person name="Brown J.A."/>
            <person name="Dorie M.J."/>
            <person name="Lazzeroni L."/>
            <person name="Brown J.M."/>
        </authorList>
    </citation>
    <scope>DISRUPTION PHENOTYPE</scope>
</reference>
<reference key="4">
    <citation type="journal article" date="2005" name="PLoS Genet.">
        <title>Genome-wide requirements for resistance to functionally distinct DNA-damaging agents.</title>
        <authorList>
            <person name="Lee W."/>
            <person name="St Onge R.P."/>
            <person name="Proctor M."/>
            <person name="Flaherty P."/>
            <person name="Jordan M.I."/>
            <person name="Arkin A.P."/>
            <person name="Davis R.W."/>
            <person name="Nislow C."/>
            <person name="Giaever G."/>
        </authorList>
    </citation>
    <scope>DISRUPTION PHENOTYPE</scope>
</reference>
<keyword id="KW-0227">DNA damage</keyword>
<gene>
    <name type="primary">PSY1</name>
    <name type="ordered locus">YKL076C</name>
</gene>
<feature type="chain" id="PRO_0000203169" description="Putative platinum sensitivity protein 1">
    <location>
        <begin position="1"/>
        <end position="127"/>
    </location>
</feature>
<protein>
    <recommendedName>
        <fullName>Putative platinum sensitivity protein 1</fullName>
    </recommendedName>
</protein>
<evidence type="ECO:0000269" key="1">
    <source>
    </source>
</evidence>
<evidence type="ECO:0000269" key="2">
    <source>
    </source>
</evidence>
<evidence type="ECO:0000305" key="3"/>
<evidence type="ECO:0000305" key="4">
    <source>
    </source>
</evidence>
<dbReference type="EMBL" id="Z28075">
    <property type="protein sequence ID" value="CAA81912.1"/>
    <property type="molecule type" value="Genomic_DNA"/>
</dbReference>
<dbReference type="PIR" id="S37901">
    <property type="entry name" value="S37901"/>
</dbReference>
<dbReference type="SMR" id="P36082"/>
<dbReference type="DIP" id="DIP-5091N"/>
<dbReference type="PaxDb" id="4932-YKL076C"/>
<dbReference type="EnsemblFungi" id="YKL076C_mRNA">
    <property type="protein sequence ID" value="YKL076C"/>
    <property type="gene ID" value="YKL076C"/>
</dbReference>
<dbReference type="AGR" id="SGD:S000001559"/>
<dbReference type="SGD" id="S000001559">
    <property type="gene designation" value="PSY1"/>
</dbReference>
<dbReference type="HOGENOM" id="CLU_1972179_0_0_1"/>
<dbReference type="GO" id="GO:0006974">
    <property type="term" value="P:DNA damage response"/>
    <property type="evidence" value="ECO:0007669"/>
    <property type="project" value="UniProtKB-KW"/>
</dbReference>
<proteinExistence type="uncertain"/>
<organism>
    <name type="scientific">Saccharomyces cerevisiae (strain ATCC 204508 / S288c)</name>
    <name type="common">Baker's yeast</name>
    <dbReference type="NCBI Taxonomy" id="559292"/>
    <lineage>
        <taxon>Eukaryota</taxon>
        <taxon>Fungi</taxon>
        <taxon>Dikarya</taxon>
        <taxon>Ascomycota</taxon>
        <taxon>Saccharomycotina</taxon>
        <taxon>Saccharomycetes</taxon>
        <taxon>Saccharomycetales</taxon>
        <taxon>Saccharomycetaceae</taxon>
        <taxon>Saccharomyces</taxon>
    </lineage>
</organism>